<keyword id="KW-0687">Ribonucleoprotein</keyword>
<keyword id="KW-0689">Ribosomal protein</keyword>
<keyword id="KW-0694">RNA-binding</keyword>
<keyword id="KW-0699">rRNA-binding</keyword>
<dbReference type="EMBL" id="BA000011">
    <property type="protein sequence ID" value="BAB59486.1"/>
    <property type="molecule type" value="Genomic_DNA"/>
</dbReference>
<dbReference type="RefSeq" id="WP_010916598.1">
    <property type="nucleotide sequence ID" value="NC_002689.2"/>
</dbReference>
<dbReference type="SMR" id="Q97BW1"/>
<dbReference type="STRING" id="273116.gene:9381121"/>
<dbReference type="PaxDb" id="273116-14324559"/>
<dbReference type="GeneID" id="1440856"/>
<dbReference type="KEGG" id="tvo:TVG0340161"/>
<dbReference type="eggNOG" id="arCOG04091">
    <property type="taxonomic scope" value="Archaea"/>
</dbReference>
<dbReference type="HOGENOM" id="CLU_098428_1_1_2"/>
<dbReference type="OrthoDB" id="5670at2157"/>
<dbReference type="PhylomeDB" id="Q97BW1"/>
<dbReference type="Proteomes" id="UP000001017">
    <property type="component" value="Chromosome"/>
</dbReference>
<dbReference type="GO" id="GO:1990904">
    <property type="term" value="C:ribonucleoprotein complex"/>
    <property type="evidence" value="ECO:0007669"/>
    <property type="project" value="UniProtKB-KW"/>
</dbReference>
<dbReference type="GO" id="GO:0005840">
    <property type="term" value="C:ribosome"/>
    <property type="evidence" value="ECO:0007669"/>
    <property type="project" value="UniProtKB-KW"/>
</dbReference>
<dbReference type="GO" id="GO:0019843">
    <property type="term" value="F:rRNA binding"/>
    <property type="evidence" value="ECO:0007669"/>
    <property type="project" value="UniProtKB-UniRule"/>
</dbReference>
<dbReference type="GO" id="GO:0003735">
    <property type="term" value="F:structural constituent of ribosome"/>
    <property type="evidence" value="ECO:0007669"/>
    <property type="project" value="InterPro"/>
</dbReference>
<dbReference type="GO" id="GO:0006412">
    <property type="term" value="P:translation"/>
    <property type="evidence" value="ECO:0007669"/>
    <property type="project" value="UniProtKB-UniRule"/>
</dbReference>
<dbReference type="FunFam" id="3.30.1490.10:FF:000002">
    <property type="entry name" value="40S ribosomal protein S15a"/>
    <property type="match status" value="1"/>
</dbReference>
<dbReference type="Gene3D" id="3.30.1370.30">
    <property type="match status" value="1"/>
</dbReference>
<dbReference type="Gene3D" id="3.30.1490.10">
    <property type="match status" value="1"/>
</dbReference>
<dbReference type="HAMAP" id="MF_01302_A">
    <property type="entry name" value="Ribosomal_uS8_A"/>
    <property type="match status" value="1"/>
</dbReference>
<dbReference type="InterPro" id="IPR000630">
    <property type="entry name" value="Ribosomal_uS8"/>
</dbReference>
<dbReference type="InterPro" id="IPR047863">
    <property type="entry name" value="Ribosomal_uS8_CS"/>
</dbReference>
<dbReference type="InterPro" id="IPR035987">
    <property type="entry name" value="Ribosomal_uS8_sf"/>
</dbReference>
<dbReference type="NCBIfam" id="NF003115">
    <property type="entry name" value="PRK04034.1"/>
    <property type="match status" value="1"/>
</dbReference>
<dbReference type="PANTHER" id="PTHR11758">
    <property type="entry name" value="40S RIBOSOMAL PROTEIN S15A"/>
    <property type="match status" value="1"/>
</dbReference>
<dbReference type="Pfam" id="PF00410">
    <property type="entry name" value="Ribosomal_S8"/>
    <property type="match status" value="1"/>
</dbReference>
<dbReference type="SUPFAM" id="SSF56047">
    <property type="entry name" value="Ribosomal protein S8"/>
    <property type="match status" value="1"/>
</dbReference>
<dbReference type="PROSITE" id="PS00053">
    <property type="entry name" value="RIBOSOMAL_S8"/>
    <property type="match status" value="1"/>
</dbReference>
<organism>
    <name type="scientific">Thermoplasma volcanium (strain ATCC 51530 / DSM 4299 / JCM 9571 / NBRC 15438 / GSS1)</name>
    <dbReference type="NCBI Taxonomy" id="273116"/>
    <lineage>
        <taxon>Archaea</taxon>
        <taxon>Methanobacteriati</taxon>
        <taxon>Thermoplasmatota</taxon>
        <taxon>Thermoplasmata</taxon>
        <taxon>Thermoplasmatales</taxon>
        <taxon>Thermoplasmataceae</taxon>
        <taxon>Thermoplasma</taxon>
    </lineage>
</organism>
<comment type="function">
    <text evidence="1">One of the primary rRNA binding proteins, it binds directly to 16S rRNA central domain where it helps coordinate assembly of the platform of the 30S subunit.</text>
</comment>
<comment type="subunit">
    <text evidence="1">Part of the 30S ribosomal subunit.</text>
</comment>
<comment type="similarity">
    <text evidence="1">Belongs to the universal ribosomal protein uS8 family.</text>
</comment>
<protein>
    <recommendedName>
        <fullName evidence="1">Small ribosomal subunit protein uS8</fullName>
    </recommendedName>
    <alternativeName>
        <fullName evidence="2">30S ribosomal protein S8</fullName>
    </alternativeName>
</protein>
<reference key="1">
    <citation type="journal article" date="2000" name="Proc. Natl. Acad. Sci. U.S.A.">
        <title>Archaeal adaptation to higher temperatures revealed by genomic sequence of Thermoplasma volcanium.</title>
        <authorList>
            <person name="Kawashima T."/>
            <person name="Amano N."/>
            <person name="Koike H."/>
            <person name="Makino S."/>
            <person name="Higuchi S."/>
            <person name="Kawashima-Ohya Y."/>
            <person name="Watanabe K."/>
            <person name="Yamazaki M."/>
            <person name="Kanehori K."/>
            <person name="Kawamoto T."/>
            <person name="Nunoshiba T."/>
            <person name="Yamamoto Y."/>
            <person name="Aramaki H."/>
            <person name="Makino K."/>
            <person name="Suzuki M."/>
        </authorList>
    </citation>
    <scope>NUCLEOTIDE SEQUENCE [LARGE SCALE GENOMIC DNA]</scope>
    <source>
        <strain>ATCC 51530 / DSM 4299 / JCM 9571 / NBRC 15438 / GSS1</strain>
    </source>
</reference>
<feature type="chain" id="PRO_0000126556" description="Small ribosomal subunit protein uS8">
    <location>
        <begin position="1"/>
        <end position="129"/>
    </location>
</feature>
<gene>
    <name evidence="1" type="primary">rps8</name>
    <name type="ordered locus">TV0344</name>
    <name type="ORF">TVG0340161</name>
</gene>
<proteinExistence type="inferred from homology"/>
<evidence type="ECO:0000255" key="1">
    <source>
        <dbReference type="HAMAP-Rule" id="MF_01302"/>
    </source>
</evidence>
<evidence type="ECO:0000305" key="2"/>
<name>RS8_THEVO</name>
<sequence>MRNDTLNDVINSIKNASRLGRREIIAEPAAKLIGKVLKVMQDYNYIKSFEVIDESRGGKFKIVLNTTINNCGVIKPRFPVKNENLEKYESRYLPAEDFGILILTTTKGVMSNIEARKLGIGGKLLAYVY</sequence>
<accession>Q97BW1</accession>